<evidence type="ECO:0000255" key="1">
    <source>
        <dbReference type="HAMAP-Rule" id="MF_01113"/>
    </source>
</evidence>
<comment type="function">
    <text evidence="1">Poorly processive, error-prone DNA polymerase involved in untargeted mutagenesis. Copies undamaged DNA at stalled replication forks, which arise in vivo from mismatched or misaligned primer ends. These misaligned primers can be extended by PolIV. Exhibits no 3'-5' exonuclease (proofreading) activity. May be involved in translesional synthesis, in conjunction with the beta clamp from PolIII.</text>
</comment>
<comment type="catalytic activity">
    <reaction evidence="1">
        <text>DNA(n) + a 2'-deoxyribonucleoside 5'-triphosphate = DNA(n+1) + diphosphate</text>
        <dbReference type="Rhea" id="RHEA:22508"/>
        <dbReference type="Rhea" id="RHEA-COMP:17339"/>
        <dbReference type="Rhea" id="RHEA-COMP:17340"/>
        <dbReference type="ChEBI" id="CHEBI:33019"/>
        <dbReference type="ChEBI" id="CHEBI:61560"/>
        <dbReference type="ChEBI" id="CHEBI:173112"/>
        <dbReference type="EC" id="2.7.7.7"/>
    </reaction>
</comment>
<comment type="cofactor">
    <cofactor evidence="1">
        <name>Mg(2+)</name>
        <dbReference type="ChEBI" id="CHEBI:18420"/>
    </cofactor>
    <text evidence="1">Binds 2 magnesium ions per subunit.</text>
</comment>
<comment type="subunit">
    <text evidence="1">Monomer.</text>
</comment>
<comment type="subcellular location">
    <subcellularLocation>
        <location evidence="1">Cytoplasm</location>
    </subcellularLocation>
</comment>
<comment type="similarity">
    <text evidence="1">Belongs to the DNA polymerase type-Y family.</text>
</comment>
<organism>
    <name type="scientific">Streptococcus agalactiae serotype III (strain NEM316)</name>
    <dbReference type="NCBI Taxonomy" id="211110"/>
    <lineage>
        <taxon>Bacteria</taxon>
        <taxon>Bacillati</taxon>
        <taxon>Bacillota</taxon>
        <taxon>Bacilli</taxon>
        <taxon>Lactobacillales</taxon>
        <taxon>Streptococcaceae</taxon>
        <taxon>Streptococcus</taxon>
    </lineage>
</organism>
<accession>Q8E3I8</accession>
<keyword id="KW-0963">Cytoplasm</keyword>
<keyword id="KW-0227">DNA damage</keyword>
<keyword id="KW-0234">DNA repair</keyword>
<keyword id="KW-0235">DNA replication</keyword>
<keyword id="KW-0238">DNA-binding</keyword>
<keyword id="KW-0239">DNA-directed DNA polymerase</keyword>
<keyword id="KW-0460">Magnesium</keyword>
<keyword id="KW-0479">Metal-binding</keyword>
<keyword id="KW-0515">Mutator protein</keyword>
<keyword id="KW-0548">Nucleotidyltransferase</keyword>
<keyword id="KW-0808">Transferase</keyword>
<gene>
    <name evidence="1" type="primary">dinB</name>
    <name type="ordered locus">gbs1771</name>
</gene>
<sequence>MLIFPLINDTSRKIIHIDMDAFFASVEERDNPSLKGKPVIIGSDPRKTGGRGVVSTCNYEARKFGVHSAMSSKEAYERCPQAIFISGNYQKYRQVGMEVRDIFKKYTDLVEPMSIDEAYLDVTENKMGIKSAVKLAKMIQYDIWNDVHLTCSAGISYNKFLAKLASDFEKPKGLTLILPDQAQDFLKPLPIEKFHGVGKRSVEKLHALGVYTGEDLLSLSEISLIDMFGRFGYDLYRKARGINASPVKPDRVRKSIGSEKTYGKLLYNEADIKAEISKNVQRVVASLEKNKKVGKTIVLKVRYADFETLTKRMTLEEYTQDFQIIDQVAKAIFDTLEESVFGIRLLGVTVTTLENEHEAIYLDF</sequence>
<feature type="chain" id="PRO_1000084949" description="DNA polymerase IV">
    <location>
        <begin position="1"/>
        <end position="364"/>
    </location>
</feature>
<feature type="domain" description="UmuC" evidence="1">
    <location>
        <begin position="14"/>
        <end position="198"/>
    </location>
</feature>
<feature type="active site" evidence="1">
    <location>
        <position position="117"/>
    </location>
</feature>
<feature type="binding site" evidence="1">
    <location>
        <position position="18"/>
    </location>
    <ligand>
        <name>Mg(2+)</name>
        <dbReference type="ChEBI" id="CHEBI:18420"/>
    </ligand>
</feature>
<feature type="binding site" evidence="1">
    <location>
        <position position="116"/>
    </location>
    <ligand>
        <name>Mg(2+)</name>
        <dbReference type="ChEBI" id="CHEBI:18420"/>
    </ligand>
</feature>
<feature type="site" description="Substrate discrimination" evidence="1">
    <location>
        <position position="23"/>
    </location>
</feature>
<proteinExistence type="inferred from homology"/>
<protein>
    <recommendedName>
        <fullName evidence="1">DNA polymerase IV</fullName>
        <shortName evidence="1">Pol IV</shortName>
        <ecNumber evidence="1">2.7.7.7</ecNumber>
    </recommendedName>
</protein>
<reference key="1">
    <citation type="journal article" date="2002" name="Mol. Microbiol.">
        <title>Genome sequence of Streptococcus agalactiae, a pathogen causing invasive neonatal disease.</title>
        <authorList>
            <person name="Glaser P."/>
            <person name="Rusniok C."/>
            <person name="Buchrieser C."/>
            <person name="Chevalier F."/>
            <person name="Frangeul L."/>
            <person name="Msadek T."/>
            <person name="Zouine M."/>
            <person name="Couve E."/>
            <person name="Lalioui L."/>
            <person name="Poyart C."/>
            <person name="Trieu-Cuot P."/>
            <person name="Kunst F."/>
        </authorList>
    </citation>
    <scope>NUCLEOTIDE SEQUENCE [LARGE SCALE GENOMIC DNA]</scope>
    <source>
        <strain>NEM316</strain>
    </source>
</reference>
<name>DPO4_STRA3</name>
<dbReference type="EC" id="2.7.7.7" evidence="1"/>
<dbReference type="EMBL" id="AL766853">
    <property type="protein sequence ID" value="CAD47430.1"/>
    <property type="molecule type" value="Genomic_DNA"/>
</dbReference>
<dbReference type="RefSeq" id="WP_000904560.1">
    <property type="nucleotide sequence ID" value="NC_004368.1"/>
</dbReference>
<dbReference type="SMR" id="Q8E3I8"/>
<dbReference type="KEGG" id="san:gbs1771"/>
<dbReference type="eggNOG" id="COG0389">
    <property type="taxonomic scope" value="Bacteria"/>
</dbReference>
<dbReference type="HOGENOM" id="CLU_012348_1_2_9"/>
<dbReference type="Proteomes" id="UP000000823">
    <property type="component" value="Chromosome"/>
</dbReference>
<dbReference type="GO" id="GO:0005829">
    <property type="term" value="C:cytosol"/>
    <property type="evidence" value="ECO:0007669"/>
    <property type="project" value="TreeGrafter"/>
</dbReference>
<dbReference type="GO" id="GO:0003684">
    <property type="term" value="F:damaged DNA binding"/>
    <property type="evidence" value="ECO:0007669"/>
    <property type="project" value="InterPro"/>
</dbReference>
<dbReference type="GO" id="GO:0003887">
    <property type="term" value="F:DNA-directed DNA polymerase activity"/>
    <property type="evidence" value="ECO:0007669"/>
    <property type="project" value="UniProtKB-UniRule"/>
</dbReference>
<dbReference type="GO" id="GO:0000287">
    <property type="term" value="F:magnesium ion binding"/>
    <property type="evidence" value="ECO:0007669"/>
    <property type="project" value="UniProtKB-UniRule"/>
</dbReference>
<dbReference type="GO" id="GO:0006261">
    <property type="term" value="P:DNA-templated DNA replication"/>
    <property type="evidence" value="ECO:0007669"/>
    <property type="project" value="UniProtKB-UniRule"/>
</dbReference>
<dbReference type="GO" id="GO:0042276">
    <property type="term" value="P:error-prone translesion synthesis"/>
    <property type="evidence" value="ECO:0007669"/>
    <property type="project" value="TreeGrafter"/>
</dbReference>
<dbReference type="GO" id="GO:0009432">
    <property type="term" value="P:SOS response"/>
    <property type="evidence" value="ECO:0007669"/>
    <property type="project" value="TreeGrafter"/>
</dbReference>
<dbReference type="CDD" id="cd03586">
    <property type="entry name" value="PolY_Pol_IV_kappa"/>
    <property type="match status" value="1"/>
</dbReference>
<dbReference type="FunFam" id="3.30.1490.100:FF:000004">
    <property type="entry name" value="DNA polymerase IV"/>
    <property type="match status" value="1"/>
</dbReference>
<dbReference type="FunFam" id="3.40.1170.60:FF:000001">
    <property type="entry name" value="DNA polymerase IV"/>
    <property type="match status" value="1"/>
</dbReference>
<dbReference type="Gene3D" id="3.30.70.270">
    <property type="match status" value="1"/>
</dbReference>
<dbReference type="Gene3D" id="3.40.1170.60">
    <property type="match status" value="1"/>
</dbReference>
<dbReference type="Gene3D" id="1.10.150.20">
    <property type="entry name" value="5' to 3' exonuclease, C-terminal subdomain"/>
    <property type="match status" value="1"/>
</dbReference>
<dbReference type="Gene3D" id="3.30.1490.100">
    <property type="entry name" value="DNA polymerase, Y-family, little finger domain"/>
    <property type="match status" value="1"/>
</dbReference>
<dbReference type="HAMAP" id="MF_01113">
    <property type="entry name" value="DNApol_IV"/>
    <property type="match status" value="1"/>
</dbReference>
<dbReference type="InterPro" id="IPR043502">
    <property type="entry name" value="DNA/RNA_pol_sf"/>
</dbReference>
<dbReference type="InterPro" id="IPR036775">
    <property type="entry name" value="DNA_pol_Y-fam_lit_finger_sf"/>
</dbReference>
<dbReference type="InterPro" id="IPR017961">
    <property type="entry name" value="DNA_pol_Y-fam_little_finger"/>
</dbReference>
<dbReference type="InterPro" id="IPR050116">
    <property type="entry name" value="DNA_polymerase-Y"/>
</dbReference>
<dbReference type="InterPro" id="IPR022880">
    <property type="entry name" value="DNApol_IV"/>
</dbReference>
<dbReference type="InterPro" id="IPR024728">
    <property type="entry name" value="PolY_HhH_motif"/>
</dbReference>
<dbReference type="InterPro" id="IPR043128">
    <property type="entry name" value="Rev_trsase/Diguanyl_cyclase"/>
</dbReference>
<dbReference type="InterPro" id="IPR001126">
    <property type="entry name" value="UmuC"/>
</dbReference>
<dbReference type="NCBIfam" id="NF002677">
    <property type="entry name" value="PRK02406.1"/>
    <property type="match status" value="1"/>
</dbReference>
<dbReference type="NCBIfam" id="NF010731">
    <property type="entry name" value="PRK14133.1"/>
    <property type="match status" value="1"/>
</dbReference>
<dbReference type="PANTHER" id="PTHR11076:SF33">
    <property type="entry name" value="DNA POLYMERASE KAPPA"/>
    <property type="match status" value="1"/>
</dbReference>
<dbReference type="PANTHER" id="PTHR11076">
    <property type="entry name" value="DNA REPAIR POLYMERASE UMUC / TRANSFERASE FAMILY MEMBER"/>
    <property type="match status" value="1"/>
</dbReference>
<dbReference type="Pfam" id="PF00817">
    <property type="entry name" value="IMS"/>
    <property type="match status" value="1"/>
</dbReference>
<dbReference type="Pfam" id="PF11799">
    <property type="entry name" value="IMS_C"/>
    <property type="match status" value="1"/>
</dbReference>
<dbReference type="Pfam" id="PF11798">
    <property type="entry name" value="IMS_HHH"/>
    <property type="match status" value="1"/>
</dbReference>
<dbReference type="SUPFAM" id="SSF56672">
    <property type="entry name" value="DNA/RNA polymerases"/>
    <property type="match status" value="1"/>
</dbReference>
<dbReference type="SUPFAM" id="SSF100879">
    <property type="entry name" value="Lesion bypass DNA polymerase (Y-family), little finger domain"/>
    <property type="match status" value="1"/>
</dbReference>
<dbReference type="PROSITE" id="PS50173">
    <property type="entry name" value="UMUC"/>
    <property type="match status" value="1"/>
</dbReference>